<organism>
    <name type="scientific">Sorghum bicolor</name>
    <name type="common">Sorghum</name>
    <name type="synonym">Sorghum vulgare</name>
    <dbReference type="NCBI Taxonomy" id="4558"/>
    <lineage>
        <taxon>Eukaryota</taxon>
        <taxon>Viridiplantae</taxon>
        <taxon>Streptophyta</taxon>
        <taxon>Embryophyta</taxon>
        <taxon>Tracheophyta</taxon>
        <taxon>Spermatophyta</taxon>
        <taxon>Magnoliopsida</taxon>
        <taxon>Liliopsida</taxon>
        <taxon>Poales</taxon>
        <taxon>Poaceae</taxon>
        <taxon>PACMAD clade</taxon>
        <taxon>Panicoideae</taxon>
        <taxon>Andropogonodae</taxon>
        <taxon>Andropogoneae</taxon>
        <taxon>Sorghinae</taxon>
        <taxon>Sorghum</taxon>
    </lineage>
</organism>
<gene>
    <name evidence="1" type="primary">LIP1P</name>
    <name type="ordered locus">Sb03g035760</name>
</gene>
<name>LISC_SORBI</name>
<keyword id="KW-0004">4Fe-4S</keyword>
<keyword id="KW-0150">Chloroplast</keyword>
<keyword id="KW-0408">Iron</keyword>
<keyword id="KW-0411">Iron-sulfur</keyword>
<keyword id="KW-0479">Metal-binding</keyword>
<keyword id="KW-0934">Plastid</keyword>
<keyword id="KW-1185">Reference proteome</keyword>
<keyword id="KW-0949">S-adenosyl-L-methionine</keyword>
<keyword id="KW-0808">Transferase</keyword>
<sequence>MQSSLARPLRPPVLAGCGGRRGHGAPRGSVSVARCRAEAAPPTVGTASRAPAGPYTGRDPEVKKPAWLRQRAAQGDKYARLRESIGELKLNTVCVEAQCPNIGECWNGGGGAGGEGDGIATATIMVLGDTCTRGCRFCAVKTSNKPPPPDPLEPLNTALAVASWGVDYVVLTSVDRDDLPDGGSSHFAQTVRALKELKPGILVECLTSDFRGDLEAVSSLANSGLDVYAHNIETVRSLQRIVRDPRAGYDQSLAVLKHAKDCREGMITKSSIMLGLGETDEEVKQAMIDLRAIGVDILTLGQYLQPTERHLTVREYVTPEKFQFWKEYGESVGFRYVASGPLVRSSYRAGELFVQNLVRNNKTGSSSS</sequence>
<dbReference type="EC" id="2.8.1.8" evidence="1"/>
<dbReference type="EMBL" id="CM000762">
    <property type="protein sequence ID" value="EES01528.1"/>
    <property type="molecule type" value="Genomic_DNA"/>
</dbReference>
<dbReference type="RefSeq" id="XP_002456408.1">
    <property type="nucleotide sequence ID" value="XM_002456363.1"/>
</dbReference>
<dbReference type="SMR" id="C5XKZ1"/>
<dbReference type="FunCoup" id="C5XKZ1">
    <property type="interactions" value="1055"/>
</dbReference>
<dbReference type="STRING" id="4558.C5XKZ1"/>
<dbReference type="EnsemblPlants" id="EES01528">
    <property type="protein sequence ID" value="EES01528"/>
    <property type="gene ID" value="SORBI_3003G309300"/>
</dbReference>
<dbReference type="GeneID" id="8072124"/>
<dbReference type="Gramene" id="EES01528">
    <property type="protein sequence ID" value="EES01528"/>
    <property type="gene ID" value="SORBI_3003G309300"/>
</dbReference>
<dbReference type="KEGG" id="sbi:8072124"/>
<dbReference type="eggNOG" id="KOG2672">
    <property type="taxonomic scope" value="Eukaryota"/>
</dbReference>
<dbReference type="HOGENOM" id="CLU_033144_2_0_1"/>
<dbReference type="InParanoid" id="C5XKZ1"/>
<dbReference type="OMA" id="RSCAFCQ"/>
<dbReference type="OrthoDB" id="3231at2759"/>
<dbReference type="UniPathway" id="UPA00538">
    <property type="reaction ID" value="UER00593"/>
</dbReference>
<dbReference type="Proteomes" id="UP000000768">
    <property type="component" value="Chromosome 3"/>
</dbReference>
<dbReference type="GO" id="GO:0009507">
    <property type="term" value="C:chloroplast"/>
    <property type="evidence" value="ECO:0007669"/>
    <property type="project" value="UniProtKB-SubCell"/>
</dbReference>
<dbReference type="GO" id="GO:0005739">
    <property type="term" value="C:mitochondrion"/>
    <property type="evidence" value="ECO:0000318"/>
    <property type="project" value="GO_Central"/>
</dbReference>
<dbReference type="GO" id="GO:0051539">
    <property type="term" value="F:4 iron, 4 sulfur cluster binding"/>
    <property type="evidence" value="ECO:0007669"/>
    <property type="project" value="UniProtKB-UniRule"/>
</dbReference>
<dbReference type="GO" id="GO:0016992">
    <property type="term" value="F:lipoate synthase activity"/>
    <property type="evidence" value="ECO:0000318"/>
    <property type="project" value="GO_Central"/>
</dbReference>
<dbReference type="GO" id="GO:0046872">
    <property type="term" value="F:metal ion binding"/>
    <property type="evidence" value="ECO:0007669"/>
    <property type="project" value="UniProtKB-KW"/>
</dbReference>
<dbReference type="GO" id="GO:0009107">
    <property type="term" value="P:lipoate biosynthetic process"/>
    <property type="evidence" value="ECO:0000318"/>
    <property type="project" value="GO_Central"/>
</dbReference>
<dbReference type="CDD" id="cd01335">
    <property type="entry name" value="Radical_SAM"/>
    <property type="match status" value="1"/>
</dbReference>
<dbReference type="FunFam" id="3.20.20.70:FF:000036">
    <property type="entry name" value="Lipoyl synthase, mitochondrial"/>
    <property type="match status" value="1"/>
</dbReference>
<dbReference type="Gene3D" id="3.20.20.70">
    <property type="entry name" value="Aldolase class I"/>
    <property type="match status" value="1"/>
</dbReference>
<dbReference type="HAMAP" id="MF_00206">
    <property type="entry name" value="Lipoyl_synth"/>
    <property type="match status" value="1"/>
</dbReference>
<dbReference type="HAMAP" id="MF_03129">
    <property type="entry name" value="Lipoyl_synth_plantC"/>
    <property type="match status" value="1"/>
</dbReference>
<dbReference type="InterPro" id="IPR013785">
    <property type="entry name" value="Aldolase_TIM"/>
</dbReference>
<dbReference type="InterPro" id="IPR006638">
    <property type="entry name" value="Elp3/MiaA/NifB-like_rSAM"/>
</dbReference>
<dbReference type="InterPro" id="IPR003698">
    <property type="entry name" value="Lipoyl_synth"/>
</dbReference>
<dbReference type="InterPro" id="IPR027526">
    <property type="entry name" value="Lipoyl_synth_chlpt"/>
</dbReference>
<dbReference type="InterPro" id="IPR007197">
    <property type="entry name" value="rSAM"/>
</dbReference>
<dbReference type="NCBIfam" id="TIGR00510">
    <property type="entry name" value="lipA"/>
    <property type="match status" value="1"/>
</dbReference>
<dbReference type="NCBIfam" id="NF004019">
    <property type="entry name" value="PRK05481.1"/>
    <property type="match status" value="1"/>
</dbReference>
<dbReference type="NCBIfam" id="NF009544">
    <property type="entry name" value="PRK12928.1"/>
    <property type="match status" value="1"/>
</dbReference>
<dbReference type="PANTHER" id="PTHR10949">
    <property type="entry name" value="LIPOYL SYNTHASE"/>
    <property type="match status" value="1"/>
</dbReference>
<dbReference type="PANTHER" id="PTHR10949:SF31">
    <property type="entry name" value="LIPOYL SYNTHASE 1, CHLOROPLASTIC"/>
    <property type="match status" value="1"/>
</dbReference>
<dbReference type="Pfam" id="PF04055">
    <property type="entry name" value="Radical_SAM"/>
    <property type="match status" value="1"/>
</dbReference>
<dbReference type="PIRSF" id="PIRSF005963">
    <property type="entry name" value="Lipoyl_synth"/>
    <property type="match status" value="1"/>
</dbReference>
<dbReference type="SFLD" id="SFLDF00271">
    <property type="entry name" value="lipoyl_synthase"/>
    <property type="match status" value="1"/>
</dbReference>
<dbReference type="SFLD" id="SFLDG01058">
    <property type="entry name" value="lipoyl_synthase_like"/>
    <property type="match status" value="1"/>
</dbReference>
<dbReference type="SMART" id="SM00729">
    <property type="entry name" value="Elp3"/>
    <property type="match status" value="1"/>
</dbReference>
<dbReference type="SUPFAM" id="SSF102114">
    <property type="entry name" value="Radical SAM enzymes"/>
    <property type="match status" value="1"/>
</dbReference>
<dbReference type="PROSITE" id="PS51918">
    <property type="entry name" value="RADICAL_SAM"/>
    <property type="match status" value="1"/>
</dbReference>
<accession>C5XKZ1</accession>
<protein>
    <recommendedName>
        <fullName evidence="1">Lipoyl synthase, chloroplastic</fullName>
        <ecNumber evidence="1">2.8.1.8</ecNumber>
    </recommendedName>
    <alternativeName>
        <fullName evidence="1">Lipoate synthase</fullName>
        <shortName evidence="1">LS</shortName>
        <shortName evidence="1">Lip-syn</shortName>
    </alternativeName>
    <alternativeName>
        <fullName evidence="1">Lipoate synthase, plastidial</fullName>
        <shortName evidence="1">LIP1p</shortName>
    </alternativeName>
    <alternativeName>
        <fullName evidence="1">Lipoic acid synthase</fullName>
    </alternativeName>
</protein>
<comment type="function">
    <text evidence="1">Catalyzes the radical-mediated insertion of two sulfur atoms into the C-6 and C-8 positions of the octanoyl moiety bound to the lipoyl domains of lipoate-dependent enzymes, thereby converting the octanoylated domains into lipoylated derivatives.</text>
</comment>
<comment type="catalytic activity">
    <reaction evidence="1">
        <text>[[Fe-S] cluster scaffold protein carrying a second [4Fe-4S](2+) cluster] + N(6)-octanoyl-L-lysyl-[protein] + 2 oxidized [2Fe-2S]-[ferredoxin] + 2 S-adenosyl-L-methionine + 4 H(+) = [[Fe-S] cluster scaffold protein] + N(6)-[(R)-dihydrolipoyl]-L-lysyl-[protein] + 4 Fe(3+) + 2 hydrogen sulfide + 2 5'-deoxyadenosine + 2 L-methionine + 2 reduced [2Fe-2S]-[ferredoxin]</text>
        <dbReference type="Rhea" id="RHEA:16585"/>
        <dbReference type="Rhea" id="RHEA-COMP:9928"/>
        <dbReference type="Rhea" id="RHEA-COMP:10000"/>
        <dbReference type="Rhea" id="RHEA-COMP:10001"/>
        <dbReference type="Rhea" id="RHEA-COMP:10475"/>
        <dbReference type="Rhea" id="RHEA-COMP:14568"/>
        <dbReference type="Rhea" id="RHEA-COMP:14569"/>
        <dbReference type="ChEBI" id="CHEBI:15378"/>
        <dbReference type="ChEBI" id="CHEBI:17319"/>
        <dbReference type="ChEBI" id="CHEBI:29034"/>
        <dbReference type="ChEBI" id="CHEBI:29919"/>
        <dbReference type="ChEBI" id="CHEBI:33722"/>
        <dbReference type="ChEBI" id="CHEBI:33737"/>
        <dbReference type="ChEBI" id="CHEBI:33738"/>
        <dbReference type="ChEBI" id="CHEBI:57844"/>
        <dbReference type="ChEBI" id="CHEBI:59789"/>
        <dbReference type="ChEBI" id="CHEBI:78809"/>
        <dbReference type="ChEBI" id="CHEBI:83100"/>
        <dbReference type="EC" id="2.8.1.8"/>
    </reaction>
</comment>
<comment type="cofactor">
    <cofactor evidence="1">
        <name>[4Fe-4S] cluster</name>
        <dbReference type="ChEBI" id="CHEBI:49883"/>
    </cofactor>
    <text evidence="1">Binds 2 [4Fe-4S] clusters per subunit. One cluster is coordinated with 3 cysteines and an exchangeable S-adenosyl-L-methionine.</text>
</comment>
<comment type="pathway">
    <text evidence="1">Protein modification; protein lipoylation via endogenous pathway; protein N(6)-(lipoyl)lysine from octanoyl-[acyl-carrier-protein]: step 2/2.</text>
</comment>
<comment type="subcellular location">
    <subcellularLocation>
        <location>Plastid</location>
        <location>Chloroplast</location>
    </subcellularLocation>
</comment>
<comment type="miscellaneous">
    <text evidence="1">This protein may be expected to contain an N-terminal transit peptide but none has been predicted.</text>
</comment>
<comment type="similarity">
    <text evidence="1">Belongs to the radical SAM superfamily. Lipoyl synthase family.</text>
</comment>
<reference key="1">
    <citation type="journal article" date="2009" name="Nature">
        <title>The Sorghum bicolor genome and the diversification of grasses.</title>
        <authorList>
            <person name="Paterson A.H."/>
            <person name="Bowers J.E."/>
            <person name="Bruggmann R."/>
            <person name="Dubchak I."/>
            <person name="Grimwood J."/>
            <person name="Gundlach H."/>
            <person name="Haberer G."/>
            <person name="Hellsten U."/>
            <person name="Mitros T."/>
            <person name="Poliakov A."/>
            <person name="Schmutz J."/>
            <person name="Spannagl M."/>
            <person name="Tang H."/>
            <person name="Wang X."/>
            <person name="Wicker T."/>
            <person name="Bharti A.K."/>
            <person name="Chapman J."/>
            <person name="Feltus F.A."/>
            <person name="Gowik U."/>
            <person name="Grigoriev I.V."/>
            <person name="Lyons E."/>
            <person name="Maher C.A."/>
            <person name="Martis M."/>
            <person name="Narechania A."/>
            <person name="Otillar R.P."/>
            <person name="Penning B.W."/>
            <person name="Salamov A.A."/>
            <person name="Wang Y."/>
            <person name="Zhang L."/>
            <person name="Carpita N.C."/>
            <person name="Freeling M."/>
            <person name="Gingle A.R."/>
            <person name="Hash C.T."/>
            <person name="Keller B."/>
            <person name="Klein P."/>
            <person name="Kresovich S."/>
            <person name="McCann M.C."/>
            <person name="Ming R."/>
            <person name="Peterson D.G."/>
            <person name="Mehboob-ur-Rahman M."/>
            <person name="Ware D."/>
            <person name="Westhoff P."/>
            <person name="Mayer K.F.X."/>
            <person name="Messing J."/>
            <person name="Rokhsar D.S."/>
        </authorList>
    </citation>
    <scope>NUCLEOTIDE SEQUENCE [LARGE SCALE GENOMIC DNA]</scope>
    <source>
        <strain>cv. BTx623</strain>
    </source>
</reference>
<reference key="2">
    <citation type="journal article" date="2018" name="Plant J.">
        <title>The Sorghum bicolor reference genome: improved assembly, gene annotations, a transcriptome atlas, and signatures of genome organization.</title>
        <authorList>
            <person name="McCormick R.F."/>
            <person name="Truong S.K."/>
            <person name="Sreedasyam A."/>
            <person name="Jenkins J."/>
            <person name="Shu S."/>
            <person name="Sims D."/>
            <person name="Kennedy M."/>
            <person name="Amirebrahimi M."/>
            <person name="Weers B.D."/>
            <person name="McKinley B."/>
            <person name="Mattison A."/>
            <person name="Morishige D.T."/>
            <person name="Grimwood J."/>
            <person name="Schmutz J."/>
            <person name="Mullet J.E."/>
        </authorList>
    </citation>
    <scope>GENOME REANNOTATION</scope>
    <source>
        <strain>cv. BTx623</strain>
    </source>
</reference>
<proteinExistence type="inferred from homology"/>
<evidence type="ECO:0000255" key="1">
    <source>
        <dbReference type="HAMAP-Rule" id="MF_03129"/>
    </source>
</evidence>
<evidence type="ECO:0000255" key="2">
    <source>
        <dbReference type="PROSITE-ProRule" id="PRU01266"/>
    </source>
</evidence>
<evidence type="ECO:0000256" key="3">
    <source>
        <dbReference type="SAM" id="MobiDB-lite"/>
    </source>
</evidence>
<feature type="chain" id="PRO_0000398870" description="Lipoyl synthase, chloroplastic">
    <location>
        <begin position="1"/>
        <end position="368"/>
    </location>
</feature>
<feature type="domain" description="Radical SAM core" evidence="2">
    <location>
        <begin position="114"/>
        <end position="335"/>
    </location>
</feature>
<feature type="region of interest" description="Disordered" evidence="3">
    <location>
        <begin position="1"/>
        <end position="30"/>
    </location>
</feature>
<feature type="region of interest" description="Disordered" evidence="3">
    <location>
        <begin position="42"/>
        <end position="61"/>
    </location>
</feature>
<feature type="binding site" evidence="1">
    <location>
        <position position="94"/>
    </location>
    <ligand>
        <name>[4Fe-4S] cluster</name>
        <dbReference type="ChEBI" id="CHEBI:49883"/>
        <label>1</label>
    </ligand>
</feature>
<feature type="binding site" evidence="1">
    <location>
        <position position="99"/>
    </location>
    <ligand>
        <name>[4Fe-4S] cluster</name>
        <dbReference type="ChEBI" id="CHEBI:49883"/>
        <label>1</label>
    </ligand>
</feature>
<feature type="binding site" evidence="1">
    <location>
        <position position="105"/>
    </location>
    <ligand>
        <name>[4Fe-4S] cluster</name>
        <dbReference type="ChEBI" id="CHEBI:49883"/>
        <label>1</label>
    </ligand>
</feature>
<feature type="binding site" evidence="1">
    <location>
        <position position="131"/>
    </location>
    <ligand>
        <name>[4Fe-4S] cluster</name>
        <dbReference type="ChEBI" id="CHEBI:49883"/>
        <label>2</label>
        <note>4Fe-4S-S-AdoMet</note>
    </ligand>
</feature>
<feature type="binding site" evidence="1">
    <location>
        <position position="135"/>
    </location>
    <ligand>
        <name>[4Fe-4S] cluster</name>
        <dbReference type="ChEBI" id="CHEBI:49883"/>
        <label>2</label>
        <note>4Fe-4S-S-AdoMet</note>
    </ligand>
</feature>
<feature type="binding site" evidence="1">
    <location>
        <position position="138"/>
    </location>
    <ligand>
        <name>[4Fe-4S] cluster</name>
        <dbReference type="ChEBI" id="CHEBI:49883"/>
        <label>2</label>
        <note>4Fe-4S-S-AdoMet</note>
    </ligand>
</feature>
<feature type="binding site" evidence="1">
    <location>
        <position position="346"/>
    </location>
    <ligand>
        <name>[4Fe-4S] cluster</name>
        <dbReference type="ChEBI" id="CHEBI:49883"/>
        <label>1</label>
    </ligand>
</feature>